<feature type="chain" id="PRO_0000127637" description="Selenide, water dikinase">
    <location>
        <begin position="1"/>
        <end position="347"/>
    </location>
</feature>
<feature type="active site" evidence="1">
    <location>
        <position position="17"/>
    </location>
</feature>
<feature type="binding site" description="in other chain" evidence="1">
    <location>
        <position position="20"/>
    </location>
    <ligand>
        <name>ATP</name>
        <dbReference type="ChEBI" id="CHEBI:30616"/>
        <note>ligand shared between dimeric partners</note>
    </ligand>
</feature>
<feature type="binding site" description="in other chain" evidence="1">
    <location>
        <begin position="48"/>
        <end position="50"/>
    </location>
    <ligand>
        <name>ATP</name>
        <dbReference type="ChEBI" id="CHEBI:30616"/>
        <note>ligand shared between dimeric partners</note>
    </ligand>
</feature>
<feature type="binding site" evidence="1">
    <location>
        <position position="51"/>
    </location>
    <ligand>
        <name>Mg(2+)</name>
        <dbReference type="ChEBI" id="CHEBI:18420"/>
    </ligand>
</feature>
<feature type="binding site" description="in other chain" evidence="1">
    <location>
        <position position="68"/>
    </location>
    <ligand>
        <name>ATP</name>
        <dbReference type="ChEBI" id="CHEBI:30616"/>
        <note>ligand shared between dimeric partners</note>
    </ligand>
</feature>
<feature type="binding site" description="in other chain" evidence="1">
    <location>
        <position position="91"/>
    </location>
    <ligand>
        <name>ATP</name>
        <dbReference type="ChEBI" id="CHEBI:30616"/>
        <note>ligand shared between dimeric partners</note>
    </ligand>
</feature>
<feature type="binding site" evidence="1">
    <location>
        <position position="91"/>
    </location>
    <ligand>
        <name>Mg(2+)</name>
        <dbReference type="ChEBI" id="CHEBI:18420"/>
    </ligand>
</feature>
<feature type="binding site" evidence="1">
    <location>
        <begin position="139"/>
        <end position="141"/>
    </location>
    <ligand>
        <name>ATP</name>
        <dbReference type="ChEBI" id="CHEBI:30616"/>
        <note>ligand shared between dimeric partners</note>
    </ligand>
</feature>
<feature type="binding site" evidence="1">
    <location>
        <position position="227"/>
    </location>
    <ligand>
        <name>Mg(2+)</name>
        <dbReference type="ChEBI" id="CHEBI:18420"/>
    </ligand>
</feature>
<feature type="site" description="Important for catalytic activity" evidence="1">
    <location>
        <position position="20"/>
    </location>
</feature>
<proteinExistence type="inferred from homology"/>
<sequence length="347" mass="36469">MSKQAIRLTQYSHGAGCGCKISPKVLETILHSEQAKFVDPNLLVGNETRDDAAVYDLGNGTSIISTTDFFMPIVDNPFDFGRIAATNAISDIFAMGGKPIMAIAILGWPINTLSPDIAREVTEGGRFACRQAGIALAGGHSIDAPEPIFGLAVTGVVPTERVKKNSTAQAGCKLFLTKPLGIGVLTTAEKKSLLKPEHQGLATEVMCRMNVAGAAFANIDGVKAMTDVTGFGLLGHLSEMCQGAGVQAMLCYQDIPKLPGVEEYIALGAVPGGTERNFASYGHLMGDMSREVRSLLCDPQTSGGLLLAVTPDAEDDVKATAAEFGIELTAIGELVEARGGRAMVEIR</sequence>
<reference key="1">
    <citation type="journal article" date="2001" name="Nature">
        <title>Complete genome sequence of a multiple drug resistant Salmonella enterica serovar Typhi CT18.</title>
        <authorList>
            <person name="Parkhill J."/>
            <person name="Dougan G."/>
            <person name="James K.D."/>
            <person name="Thomson N.R."/>
            <person name="Pickard D."/>
            <person name="Wain J."/>
            <person name="Churcher C.M."/>
            <person name="Mungall K.L."/>
            <person name="Bentley S.D."/>
            <person name="Holden M.T.G."/>
            <person name="Sebaihia M."/>
            <person name="Baker S."/>
            <person name="Basham D."/>
            <person name="Brooks K."/>
            <person name="Chillingworth T."/>
            <person name="Connerton P."/>
            <person name="Cronin A."/>
            <person name="Davis P."/>
            <person name="Davies R.M."/>
            <person name="Dowd L."/>
            <person name="White N."/>
            <person name="Farrar J."/>
            <person name="Feltwell T."/>
            <person name="Hamlin N."/>
            <person name="Haque A."/>
            <person name="Hien T.T."/>
            <person name="Holroyd S."/>
            <person name="Jagels K."/>
            <person name="Krogh A."/>
            <person name="Larsen T.S."/>
            <person name="Leather S."/>
            <person name="Moule S."/>
            <person name="O'Gaora P."/>
            <person name="Parry C."/>
            <person name="Quail M.A."/>
            <person name="Rutherford K.M."/>
            <person name="Simmonds M."/>
            <person name="Skelton J."/>
            <person name="Stevens K."/>
            <person name="Whitehead S."/>
            <person name="Barrell B.G."/>
        </authorList>
    </citation>
    <scope>NUCLEOTIDE SEQUENCE [LARGE SCALE GENOMIC DNA]</scope>
    <source>
        <strain>CT18</strain>
    </source>
</reference>
<reference key="2">
    <citation type="journal article" date="2003" name="J. Bacteriol.">
        <title>Comparative genomics of Salmonella enterica serovar Typhi strains Ty2 and CT18.</title>
        <authorList>
            <person name="Deng W."/>
            <person name="Liou S.-R."/>
            <person name="Plunkett G. III"/>
            <person name="Mayhew G.F."/>
            <person name="Rose D.J."/>
            <person name="Burland V."/>
            <person name="Kodoyianni V."/>
            <person name="Schwartz D.C."/>
            <person name="Blattner F.R."/>
        </authorList>
    </citation>
    <scope>NUCLEOTIDE SEQUENCE [LARGE SCALE GENOMIC DNA]</scope>
    <source>
        <strain>ATCC 700931 / Ty2</strain>
    </source>
</reference>
<gene>
    <name evidence="1" type="primary">selD</name>
    <name type="ordered locus">STY1817</name>
    <name type="ordered locus">t1176</name>
</gene>
<comment type="function">
    <text evidence="1">Synthesizes selenophosphate from selenide and ATP.</text>
</comment>
<comment type="catalytic activity">
    <reaction evidence="1">
        <text>hydrogenselenide + ATP + H2O = selenophosphate + AMP + phosphate + 2 H(+)</text>
        <dbReference type="Rhea" id="RHEA:18737"/>
        <dbReference type="ChEBI" id="CHEBI:15377"/>
        <dbReference type="ChEBI" id="CHEBI:15378"/>
        <dbReference type="ChEBI" id="CHEBI:16144"/>
        <dbReference type="ChEBI" id="CHEBI:29317"/>
        <dbReference type="ChEBI" id="CHEBI:30616"/>
        <dbReference type="ChEBI" id="CHEBI:43474"/>
        <dbReference type="ChEBI" id="CHEBI:456215"/>
        <dbReference type="EC" id="2.7.9.3"/>
    </reaction>
</comment>
<comment type="cofactor">
    <cofactor evidence="1">
        <name>Mg(2+)</name>
        <dbReference type="ChEBI" id="CHEBI:18420"/>
    </cofactor>
    <text evidence="1">Binds 1 Mg(2+) ion per monomer.</text>
</comment>
<comment type="subunit">
    <text evidence="1">Homodimer.</text>
</comment>
<comment type="similarity">
    <text evidence="1">Belongs to the selenophosphate synthase 1 family. Class I subfamily.</text>
</comment>
<accession>Q8Z6F4</accession>
<evidence type="ECO:0000255" key="1">
    <source>
        <dbReference type="HAMAP-Rule" id="MF_00625"/>
    </source>
</evidence>
<dbReference type="EC" id="2.7.9.3" evidence="1"/>
<dbReference type="EMBL" id="AL513382">
    <property type="protein sequence ID" value="CAD02057.1"/>
    <property type="molecule type" value="Genomic_DNA"/>
</dbReference>
<dbReference type="EMBL" id="AE014613">
    <property type="protein sequence ID" value="AAO68833.1"/>
    <property type="molecule type" value="Genomic_DNA"/>
</dbReference>
<dbReference type="RefSeq" id="NP_456215.1">
    <property type="nucleotide sequence ID" value="NC_003198.1"/>
</dbReference>
<dbReference type="RefSeq" id="WP_000043069.1">
    <property type="nucleotide sequence ID" value="NZ_WSUR01000034.1"/>
</dbReference>
<dbReference type="SMR" id="Q8Z6F4"/>
<dbReference type="STRING" id="220341.gene:17585749"/>
<dbReference type="KEGG" id="stt:t1176"/>
<dbReference type="KEGG" id="sty:STY1817"/>
<dbReference type="PATRIC" id="fig|220341.7.peg.1830"/>
<dbReference type="eggNOG" id="COG0709">
    <property type="taxonomic scope" value="Bacteria"/>
</dbReference>
<dbReference type="HOGENOM" id="CLU_032859_0_1_6"/>
<dbReference type="OMA" id="LARDWMC"/>
<dbReference type="OrthoDB" id="9767928at2"/>
<dbReference type="Proteomes" id="UP000000541">
    <property type="component" value="Chromosome"/>
</dbReference>
<dbReference type="Proteomes" id="UP000002670">
    <property type="component" value="Chromosome"/>
</dbReference>
<dbReference type="GO" id="GO:0005737">
    <property type="term" value="C:cytoplasm"/>
    <property type="evidence" value="ECO:0007669"/>
    <property type="project" value="TreeGrafter"/>
</dbReference>
<dbReference type="GO" id="GO:0005524">
    <property type="term" value="F:ATP binding"/>
    <property type="evidence" value="ECO:0007669"/>
    <property type="project" value="UniProtKB-UniRule"/>
</dbReference>
<dbReference type="GO" id="GO:0000287">
    <property type="term" value="F:magnesium ion binding"/>
    <property type="evidence" value="ECO:0007669"/>
    <property type="project" value="UniProtKB-UniRule"/>
</dbReference>
<dbReference type="GO" id="GO:0004756">
    <property type="term" value="F:selenide, water dikinase activity"/>
    <property type="evidence" value="ECO:0007669"/>
    <property type="project" value="UniProtKB-UniRule"/>
</dbReference>
<dbReference type="GO" id="GO:0016260">
    <property type="term" value="P:selenocysteine biosynthetic process"/>
    <property type="evidence" value="ECO:0007669"/>
    <property type="project" value="InterPro"/>
</dbReference>
<dbReference type="CDD" id="cd02195">
    <property type="entry name" value="SelD"/>
    <property type="match status" value="1"/>
</dbReference>
<dbReference type="FunFam" id="3.30.1330.10:FF:000003">
    <property type="entry name" value="Selenide, water dikinase"/>
    <property type="match status" value="1"/>
</dbReference>
<dbReference type="FunFam" id="3.90.650.10:FF:000004">
    <property type="entry name" value="Selenide, water dikinase"/>
    <property type="match status" value="1"/>
</dbReference>
<dbReference type="Gene3D" id="3.90.650.10">
    <property type="entry name" value="PurM-like C-terminal domain"/>
    <property type="match status" value="1"/>
</dbReference>
<dbReference type="Gene3D" id="3.30.1330.10">
    <property type="entry name" value="PurM-like, N-terminal domain"/>
    <property type="match status" value="1"/>
</dbReference>
<dbReference type="HAMAP" id="MF_00625">
    <property type="entry name" value="SelD"/>
    <property type="match status" value="1"/>
</dbReference>
<dbReference type="InterPro" id="IPR010918">
    <property type="entry name" value="PurM-like_C_dom"/>
</dbReference>
<dbReference type="InterPro" id="IPR036676">
    <property type="entry name" value="PurM-like_C_sf"/>
</dbReference>
<dbReference type="InterPro" id="IPR016188">
    <property type="entry name" value="PurM-like_N"/>
</dbReference>
<dbReference type="InterPro" id="IPR036921">
    <property type="entry name" value="PurM-like_N_sf"/>
</dbReference>
<dbReference type="InterPro" id="IPR023061">
    <property type="entry name" value="SelD_I"/>
</dbReference>
<dbReference type="InterPro" id="IPR004536">
    <property type="entry name" value="SPS/SelD"/>
</dbReference>
<dbReference type="NCBIfam" id="NF002098">
    <property type="entry name" value="PRK00943.1"/>
    <property type="match status" value="1"/>
</dbReference>
<dbReference type="NCBIfam" id="TIGR00476">
    <property type="entry name" value="selD"/>
    <property type="match status" value="1"/>
</dbReference>
<dbReference type="PANTHER" id="PTHR10256:SF0">
    <property type="entry name" value="INACTIVE SELENIDE, WATER DIKINASE-LIKE PROTEIN-RELATED"/>
    <property type="match status" value="1"/>
</dbReference>
<dbReference type="PANTHER" id="PTHR10256">
    <property type="entry name" value="SELENIDE, WATER DIKINASE"/>
    <property type="match status" value="1"/>
</dbReference>
<dbReference type="Pfam" id="PF00586">
    <property type="entry name" value="AIRS"/>
    <property type="match status" value="1"/>
</dbReference>
<dbReference type="Pfam" id="PF02769">
    <property type="entry name" value="AIRS_C"/>
    <property type="match status" value="1"/>
</dbReference>
<dbReference type="PIRSF" id="PIRSF036407">
    <property type="entry name" value="Selenphspht_syn"/>
    <property type="match status" value="1"/>
</dbReference>
<dbReference type="SUPFAM" id="SSF56042">
    <property type="entry name" value="PurM C-terminal domain-like"/>
    <property type="match status" value="1"/>
</dbReference>
<dbReference type="SUPFAM" id="SSF55326">
    <property type="entry name" value="PurM N-terminal domain-like"/>
    <property type="match status" value="1"/>
</dbReference>
<protein>
    <recommendedName>
        <fullName evidence="1">Selenide, water dikinase</fullName>
        <ecNumber evidence="1">2.7.9.3</ecNumber>
    </recommendedName>
    <alternativeName>
        <fullName evidence="1">Selenium donor protein</fullName>
    </alternativeName>
    <alternativeName>
        <fullName evidence="1">Selenophosphate synthase</fullName>
    </alternativeName>
</protein>
<organism>
    <name type="scientific">Salmonella typhi</name>
    <dbReference type="NCBI Taxonomy" id="90370"/>
    <lineage>
        <taxon>Bacteria</taxon>
        <taxon>Pseudomonadati</taxon>
        <taxon>Pseudomonadota</taxon>
        <taxon>Gammaproteobacteria</taxon>
        <taxon>Enterobacterales</taxon>
        <taxon>Enterobacteriaceae</taxon>
        <taxon>Salmonella</taxon>
    </lineage>
</organism>
<keyword id="KW-0067">ATP-binding</keyword>
<keyword id="KW-0418">Kinase</keyword>
<keyword id="KW-0460">Magnesium</keyword>
<keyword id="KW-0479">Metal-binding</keyword>
<keyword id="KW-0547">Nucleotide-binding</keyword>
<keyword id="KW-0711">Selenium</keyword>
<keyword id="KW-0808">Transferase</keyword>
<name>SELD_SALTI</name>